<dbReference type="EMBL" id="U36840">
    <property type="protein sequence ID" value="AAA79788.1"/>
    <property type="status" value="ALT_INIT"/>
    <property type="molecule type" value="Genomic_DNA"/>
</dbReference>
<dbReference type="EMBL" id="U00096">
    <property type="protein sequence ID" value="AAC75667.2"/>
    <property type="molecule type" value="Genomic_DNA"/>
</dbReference>
<dbReference type="EMBL" id="AP009048">
    <property type="protein sequence ID" value="BAA16503.1"/>
    <property type="molecule type" value="Genomic_DNA"/>
</dbReference>
<dbReference type="EMBL" id="D12501">
    <property type="status" value="NOT_ANNOTATED_CDS"/>
    <property type="molecule type" value="Genomic_DNA"/>
</dbReference>
<dbReference type="PIR" id="T08631">
    <property type="entry name" value="T08631"/>
</dbReference>
<dbReference type="RefSeq" id="NP_417108.4">
    <property type="nucleotide sequence ID" value="NC_000913.3"/>
</dbReference>
<dbReference type="RefSeq" id="WP_001117838.1">
    <property type="nucleotide sequence ID" value="NZ_STEB01000040.1"/>
</dbReference>
<dbReference type="SMR" id="P52119"/>
<dbReference type="BioGRID" id="4263354">
    <property type="interactions" value="55"/>
</dbReference>
<dbReference type="FunCoup" id="P52119">
    <property type="interactions" value="120"/>
</dbReference>
<dbReference type="IntAct" id="P52119">
    <property type="interactions" value="19"/>
</dbReference>
<dbReference type="STRING" id="511145.b2618"/>
<dbReference type="jPOST" id="P52119"/>
<dbReference type="PaxDb" id="511145-b2618"/>
<dbReference type="EnsemblBacteria" id="AAC75667">
    <property type="protein sequence ID" value="AAC75667"/>
    <property type="gene ID" value="b2618"/>
</dbReference>
<dbReference type="GeneID" id="945078"/>
<dbReference type="KEGG" id="ecj:JW2599"/>
<dbReference type="KEGG" id="eco:b2618"/>
<dbReference type="KEGG" id="ecoc:C3026_14490"/>
<dbReference type="PATRIC" id="fig|511145.12.peg.2716"/>
<dbReference type="EchoBASE" id="EB2984"/>
<dbReference type="eggNOG" id="COG2914">
    <property type="taxonomic scope" value="Bacteria"/>
</dbReference>
<dbReference type="HOGENOM" id="CLU_150721_1_0_6"/>
<dbReference type="InParanoid" id="P52119"/>
<dbReference type="OMA" id="QQACPEV"/>
<dbReference type="OrthoDB" id="9796575at2"/>
<dbReference type="PhylomeDB" id="P52119"/>
<dbReference type="BioCyc" id="EcoCyc:G7357-MONOMER"/>
<dbReference type="PRO" id="PR:P52119"/>
<dbReference type="Proteomes" id="UP000000625">
    <property type="component" value="Chromosome"/>
</dbReference>
<dbReference type="GO" id="GO:0005886">
    <property type="term" value="C:plasma membrane"/>
    <property type="evidence" value="ECO:0007005"/>
    <property type="project" value="EcoCyc"/>
</dbReference>
<dbReference type="Gene3D" id="3.10.20.280">
    <property type="entry name" value="RnfH-like"/>
    <property type="match status" value="1"/>
</dbReference>
<dbReference type="HAMAP" id="MF_00460">
    <property type="entry name" value="UPF0125_RnfH"/>
    <property type="match status" value="1"/>
</dbReference>
<dbReference type="InterPro" id="IPR016155">
    <property type="entry name" value="Mopterin_synth/thiamin_S_b"/>
</dbReference>
<dbReference type="InterPro" id="IPR005346">
    <property type="entry name" value="RnfH"/>
</dbReference>
<dbReference type="InterPro" id="IPR037021">
    <property type="entry name" value="RnfH_sf"/>
</dbReference>
<dbReference type="NCBIfam" id="NF002490">
    <property type="entry name" value="PRK01777.1"/>
    <property type="match status" value="1"/>
</dbReference>
<dbReference type="PANTHER" id="PTHR37483">
    <property type="entry name" value="UPF0125 PROTEIN RATB"/>
    <property type="match status" value="1"/>
</dbReference>
<dbReference type="PANTHER" id="PTHR37483:SF1">
    <property type="entry name" value="UPF0125 PROTEIN RATB"/>
    <property type="match status" value="1"/>
</dbReference>
<dbReference type="Pfam" id="PF03658">
    <property type="entry name" value="Ub-RnfH"/>
    <property type="match status" value="1"/>
</dbReference>
<dbReference type="SUPFAM" id="SSF54285">
    <property type="entry name" value="MoaD/ThiS"/>
    <property type="match status" value="1"/>
</dbReference>
<proteinExistence type="evidence at protein level"/>
<gene>
    <name type="primary">ratB</name>
    <name type="synonym">pasI</name>
    <name type="synonym">yfjF</name>
    <name type="ordered locus">b2618</name>
    <name type="ordered locus">JW2599</name>
</gene>
<feature type="chain" id="PRO_0000192487" description="UPF0125 protein RatB">
    <location>
        <begin position="1"/>
        <end position="96"/>
    </location>
</feature>
<organism>
    <name type="scientific">Escherichia coli (strain K12)</name>
    <dbReference type="NCBI Taxonomy" id="83333"/>
    <lineage>
        <taxon>Bacteria</taxon>
        <taxon>Pseudomonadati</taxon>
        <taxon>Pseudomonadota</taxon>
        <taxon>Gammaproteobacteria</taxon>
        <taxon>Enterobacterales</taxon>
        <taxon>Enterobacteriaceae</taxon>
        <taxon>Escherichia</taxon>
    </lineage>
</organism>
<comment type="function">
    <text>Does not function as an antitoxin to the upstream RatA toxin.</text>
</comment>
<comment type="disruption phenotype">
    <text evidence="1">Deletion of the ratA-ratB operon has no effect on bacterial persistence on rich medium for this strain, but does affect bacterial persistence for E.coli strain CFT073.</text>
</comment>
<comment type="similarity">
    <text evidence="2">Belongs to the UPF0125 (RnfH) family.</text>
</comment>
<comment type="sequence caution" evidence="2">
    <conflict type="erroneous initiation">
        <sequence resource="EMBL-CDS" id="AAA79788"/>
    </conflict>
    <text>Extended N-terminus.</text>
</comment>
<evidence type="ECO:0000269" key="1">
    <source>
    </source>
</evidence>
<evidence type="ECO:0000305" key="2"/>
<accession>P52119</accession>
<accession>P76603</accession>
<protein>
    <recommendedName>
        <fullName>UPF0125 protein RatB</fullName>
    </recommendedName>
</protein>
<keyword id="KW-1185">Reference proteome</keyword>
<name>RATB_ECOLI</name>
<reference key="1">
    <citation type="journal article" date="1997" name="DNA Res.">
        <title>Construction of a contiguous 874-kb sequence of the Escherichia coli-K12 genome corresponding to 50.0-68.8 min on the linkage map and analysis of its sequence features.</title>
        <authorList>
            <person name="Yamamoto Y."/>
            <person name="Aiba H."/>
            <person name="Baba T."/>
            <person name="Hayashi K."/>
            <person name="Inada T."/>
            <person name="Isono K."/>
            <person name="Itoh T."/>
            <person name="Kimura S."/>
            <person name="Kitagawa M."/>
            <person name="Makino K."/>
            <person name="Miki T."/>
            <person name="Mitsuhashi N."/>
            <person name="Mizobuchi K."/>
            <person name="Mori H."/>
            <person name="Nakade S."/>
            <person name="Nakamura Y."/>
            <person name="Nashimoto H."/>
            <person name="Oshima T."/>
            <person name="Oyama S."/>
            <person name="Saito N."/>
            <person name="Sampei G."/>
            <person name="Satoh Y."/>
            <person name="Sivasundaram S."/>
            <person name="Tagami H."/>
            <person name="Takahashi H."/>
            <person name="Takeda J."/>
            <person name="Takemoto K."/>
            <person name="Uehara K."/>
            <person name="Wada C."/>
            <person name="Yamagata S."/>
            <person name="Horiuchi T."/>
        </authorList>
    </citation>
    <scope>NUCLEOTIDE SEQUENCE [LARGE SCALE GENOMIC DNA]</scope>
    <source>
        <strain>K12 / W3110 / ATCC 27325 / DSM 5911</strain>
    </source>
</reference>
<reference key="2">
    <citation type="journal article" date="1997" name="Science">
        <title>The complete genome sequence of Escherichia coli K-12.</title>
        <authorList>
            <person name="Blattner F.R."/>
            <person name="Plunkett G. III"/>
            <person name="Bloch C.A."/>
            <person name="Perna N.T."/>
            <person name="Burland V."/>
            <person name="Riley M."/>
            <person name="Collado-Vides J."/>
            <person name="Glasner J.D."/>
            <person name="Rode C.K."/>
            <person name="Mayhew G.F."/>
            <person name="Gregor J."/>
            <person name="Davis N.W."/>
            <person name="Kirkpatrick H.A."/>
            <person name="Goeden M.A."/>
            <person name="Rose D.J."/>
            <person name="Mau B."/>
            <person name="Shao Y."/>
        </authorList>
    </citation>
    <scope>NUCLEOTIDE SEQUENCE [LARGE SCALE GENOMIC DNA]</scope>
    <source>
        <strain>K12 / MG1655 / ATCC 47076</strain>
    </source>
</reference>
<reference key="3">
    <citation type="journal article" date="2006" name="Mol. Syst. Biol.">
        <title>Highly accurate genome sequences of Escherichia coli K-12 strains MG1655 and W3110.</title>
        <authorList>
            <person name="Hayashi K."/>
            <person name="Morooka N."/>
            <person name="Yamamoto Y."/>
            <person name="Fujita K."/>
            <person name="Isono K."/>
            <person name="Choi S."/>
            <person name="Ohtsubo E."/>
            <person name="Baba T."/>
            <person name="Wanner B.L."/>
            <person name="Mori H."/>
            <person name="Horiuchi T."/>
        </authorList>
    </citation>
    <scope>NUCLEOTIDE SEQUENCE [LARGE SCALE GENOMIC DNA]</scope>
    <source>
        <strain>K12 / W3110 / ATCC 27325 / DSM 5911</strain>
    </source>
</reference>
<reference key="4">
    <citation type="journal article" date="1994" name="Proc. Natl. Acad. Sci. U.S.A.">
        <title>A tRNA-like structure is present in 10Sa RNA, a small stable RNA from Escherichia coli.</title>
        <authorList>
            <person name="Komine Y."/>
            <person name="Kitabatake M."/>
            <person name="Yokogawa T."/>
            <person name="Nishikawa K."/>
            <person name="Inokuchi H."/>
        </authorList>
    </citation>
    <scope>NUCLEOTIDE SEQUENCE [GENOMIC DNA] OF 1-20</scope>
    <source>
        <strain>K12</strain>
    </source>
</reference>
<reference key="5">
    <citation type="journal article" date="1999" name="Electrophoresis">
        <title>Enrichment of low abundance proteins of Escherichia coli by hydroxyapatite chromatography.</title>
        <authorList>
            <person name="Fountoulakis M."/>
            <person name="Takacs M.-F."/>
            <person name="Berndt P."/>
            <person name="Langen H."/>
            <person name="Takacs B."/>
        </authorList>
    </citation>
    <scope>IDENTIFICATION BY MASS SPECTROMETRY</scope>
    <source>
        <strain>B / BL21</strain>
    </source>
</reference>
<reference key="6">
    <citation type="journal article" date="2011" name="Mol. Microbiol.">
        <title>RatA (YfjG), an Escherichia coli toxin, inhibits 70S ribosome association to block translation initiation.</title>
        <authorList>
            <person name="Zhang Y."/>
            <person name="Inouye M."/>
        </authorList>
    </citation>
    <scope>LACK OF ANTITOXIN FUNCTION</scope>
</reference>
<reference key="7">
    <citation type="journal article" date="2012" name="PLoS Pathog.">
        <title>Toxin-antitoxin systems are important for niche-specific colonization and stress resistance of uropathogenic Escherichia coli.</title>
        <authorList>
            <person name="Norton J.P."/>
            <person name="Mulvey M.A."/>
        </authorList>
    </citation>
    <scope>DISRUPTION PHENOTYPE</scope>
    <source>
        <strain>K12 / MG1655 / ATCC 47076</strain>
    </source>
</reference>
<sequence>MPGKIAVEVAYALPEKQYLQRVTLQEGATVEEAIRASGLLELRTDIDLTKNKVGIYSRPAKLSDSVHDGDRVEIYRPLIADPKELRRQRAEKSANK</sequence>